<accession>P35805</accession>
<evidence type="ECO:0000255" key="1">
    <source>
        <dbReference type="PROSITE-ProRule" id="PRU00981"/>
    </source>
</evidence>
<evidence type="ECO:0000256" key="2">
    <source>
        <dbReference type="SAM" id="MobiDB-lite"/>
    </source>
</evidence>
<evidence type="ECO:0000269" key="3">
    <source>
    </source>
</evidence>
<protein>
    <recommendedName>
        <fullName>Protein L-Myc-1-B</fullName>
    </recommendedName>
    <alternativeName>
        <fullName>Protein L-Myc 2</fullName>
        <shortName>xL-Myc2</shortName>
    </alternativeName>
</protein>
<feature type="chain" id="PRO_0000127338" description="Protein L-Myc-1-B">
    <location>
        <begin position="1"/>
        <end position="344"/>
    </location>
</feature>
<feature type="domain" description="bHLH" evidence="1">
    <location>
        <begin position="261"/>
        <end position="313"/>
    </location>
</feature>
<feature type="region of interest" description="Disordered" evidence="2">
    <location>
        <begin position="104"/>
        <end position="162"/>
    </location>
</feature>
<feature type="region of interest" description="Disordered" evidence="2">
    <location>
        <begin position="208"/>
        <end position="271"/>
    </location>
</feature>
<feature type="region of interest" description="Leucine-zipper">
    <location>
        <begin position="313"/>
        <end position="341"/>
    </location>
</feature>
<feature type="compositionally biased region" description="Polar residues" evidence="2">
    <location>
        <begin position="104"/>
        <end position="113"/>
    </location>
</feature>
<feature type="compositionally biased region" description="Polar residues" evidence="2">
    <location>
        <begin position="213"/>
        <end position="223"/>
    </location>
</feature>
<feature type="compositionally biased region" description="Basic and acidic residues" evidence="2">
    <location>
        <begin position="259"/>
        <end position="270"/>
    </location>
</feature>
<gene>
    <name type="primary">mycl1-b</name>
    <name type="synonym">lmyc-b</name>
    <name type="synonym">lmyc2</name>
</gene>
<organism>
    <name type="scientific">Xenopus laevis</name>
    <name type="common">African clawed frog</name>
    <dbReference type="NCBI Taxonomy" id="8355"/>
    <lineage>
        <taxon>Eukaryota</taxon>
        <taxon>Metazoa</taxon>
        <taxon>Chordata</taxon>
        <taxon>Craniata</taxon>
        <taxon>Vertebrata</taxon>
        <taxon>Euteleostomi</taxon>
        <taxon>Amphibia</taxon>
        <taxon>Batrachia</taxon>
        <taxon>Anura</taxon>
        <taxon>Pipoidea</taxon>
        <taxon>Pipidae</taxon>
        <taxon>Xenopodinae</taxon>
        <taxon>Xenopus</taxon>
        <taxon>Xenopus</taxon>
    </lineage>
</organism>
<comment type="subunit">
    <text>Efficient DNA binding requires dimerization with another bHLH protein. Binds DNA as a heterodimer with MAX.</text>
</comment>
<comment type="subcellular location">
    <subcellularLocation>
        <location>Nucleus</location>
    </subcellularLocation>
</comment>
<comment type="tissue specificity">
    <text evidence="3">High levels in oocytes, modest levels in kidney and low levels in spleen.</text>
</comment>
<sequence>MDFSSCNNHYFYDVDMKEDFYRCIAPSEDIWKKFELVPGFPLSSGGCPGGGGTDWAAEMMDLGWESPVKLTGLSSVVLLRDCMWSGFSTRERLEKVIHERLSTGSPRVTNTQKPVADNETSEPGVDSIEQNATPLVVPTPIPEKVPNSSGSESTSDSEEDEIDVVTVEKRKSYGGRQPVTITVRADPTATKLFHISIHQQQHNYAARLPPEPNTMSPQHNFHSTVKEEPGEVTSPPELQPCSPQMPDSPLASGSSDSEDLAKRKNHNYLERKRRNDLRSRFLALREEVPSLSRSTKTPKVVVLSKATEFLKGLVIQEQQLTAEKLKLWSRHQQLLRRISQLKGR</sequence>
<keyword id="KW-0238">DNA-binding</keyword>
<keyword id="KW-0539">Nucleus</keyword>
<keyword id="KW-0597">Phosphoprotein</keyword>
<keyword id="KW-1185">Reference proteome</keyword>
<dbReference type="EMBL" id="L11363">
    <property type="protein sequence ID" value="AAB59952.1"/>
    <property type="molecule type" value="mRNA"/>
</dbReference>
<dbReference type="SMR" id="P35805"/>
<dbReference type="AGR" id="Xenbase:XB-GENE-6251632"/>
<dbReference type="Xenbase" id="XB-GENE-6251632">
    <property type="gene designation" value="mycl.S"/>
</dbReference>
<dbReference type="Proteomes" id="UP000186698">
    <property type="component" value="Unplaced"/>
</dbReference>
<dbReference type="GO" id="GO:0005634">
    <property type="term" value="C:nucleus"/>
    <property type="evidence" value="ECO:0007669"/>
    <property type="project" value="UniProtKB-SubCell"/>
</dbReference>
<dbReference type="GO" id="GO:0000981">
    <property type="term" value="F:DNA-binding transcription factor activity, RNA polymerase II-specific"/>
    <property type="evidence" value="ECO:0000318"/>
    <property type="project" value="GO_Central"/>
</dbReference>
<dbReference type="GO" id="GO:0046983">
    <property type="term" value="F:protein dimerization activity"/>
    <property type="evidence" value="ECO:0007669"/>
    <property type="project" value="InterPro"/>
</dbReference>
<dbReference type="GO" id="GO:0000978">
    <property type="term" value="F:RNA polymerase II cis-regulatory region sequence-specific DNA binding"/>
    <property type="evidence" value="ECO:0000318"/>
    <property type="project" value="GO_Central"/>
</dbReference>
<dbReference type="GO" id="GO:0006357">
    <property type="term" value="P:regulation of transcription by RNA polymerase II"/>
    <property type="evidence" value="ECO:0000318"/>
    <property type="project" value="GO_Central"/>
</dbReference>
<dbReference type="CDD" id="cd11457">
    <property type="entry name" value="bHLHzip_L-Myc"/>
    <property type="match status" value="1"/>
</dbReference>
<dbReference type="FunFam" id="4.10.280.10:FF:000019">
    <property type="entry name" value="Myc proto-oncogene protein"/>
    <property type="match status" value="1"/>
</dbReference>
<dbReference type="Gene3D" id="4.10.280.10">
    <property type="entry name" value="Helix-loop-helix DNA-binding domain"/>
    <property type="match status" value="1"/>
</dbReference>
<dbReference type="InterPro" id="IPR011598">
    <property type="entry name" value="bHLH_dom"/>
</dbReference>
<dbReference type="InterPro" id="IPR036638">
    <property type="entry name" value="HLH_DNA-bd_sf"/>
</dbReference>
<dbReference type="InterPro" id="IPR050433">
    <property type="entry name" value="Myc_transcription_factors"/>
</dbReference>
<dbReference type="InterPro" id="IPR002418">
    <property type="entry name" value="Tscrpt_reg_Myc"/>
</dbReference>
<dbReference type="InterPro" id="IPR012682">
    <property type="entry name" value="Tscrpt_reg_Myc_N"/>
</dbReference>
<dbReference type="PANTHER" id="PTHR45851">
    <property type="entry name" value="MYC PROTO-ONCOGENE"/>
    <property type="match status" value="1"/>
</dbReference>
<dbReference type="Pfam" id="PF00010">
    <property type="entry name" value="HLH"/>
    <property type="match status" value="1"/>
</dbReference>
<dbReference type="Pfam" id="PF01056">
    <property type="entry name" value="Myc_N"/>
    <property type="match status" value="2"/>
</dbReference>
<dbReference type="PIRSF" id="PIRSF001705">
    <property type="entry name" value="Myc_protein"/>
    <property type="match status" value="1"/>
</dbReference>
<dbReference type="PRINTS" id="PR00044">
    <property type="entry name" value="LEUZIPPRMYC"/>
</dbReference>
<dbReference type="SMART" id="SM00353">
    <property type="entry name" value="HLH"/>
    <property type="match status" value="1"/>
</dbReference>
<dbReference type="SUPFAM" id="SSF47459">
    <property type="entry name" value="HLH, helix-loop-helix DNA-binding domain"/>
    <property type="match status" value="1"/>
</dbReference>
<dbReference type="PROSITE" id="PS50888">
    <property type="entry name" value="BHLH"/>
    <property type="match status" value="1"/>
</dbReference>
<reference key="1">
    <citation type="journal article" date="1993" name="Mol. Cell. Biol.">
        <title>Comparative analysis of the expression and oncogenic activities of Xenopus c-, N-, and L-myc homologs.</title>
        <authorList>
            <person name="Schreiber-Agus N."/>
            <person name="Torres R."/>
            <person name="Horner J."/>
            <person name="Lau A."/>
            <person name="Jamrich M."/>
            <person name="DePinho R.A."/>
        </authorList>
    </citation>
    <scope>NUCLEOTIDE SEQUENCE [MRNA]</scope>
    <scope>TISSUE SPECIFICITY</scope>
    <source>
        <tissue>Oocyte</tissue>
    </source>
</reference>
<name>MCL1B_XENLA</name>
<proteinExistence type="evidence at transcript level"/>